<feature type="chain" id="PRO_1000006456" description="tRNA (guanine-N(1)-)-methyltransferase">
    <location>
        <begin position="1"/>
        <end position="264"/>
    </location>
</feature>
<feature type="binding site" evidence="1">
    <location>
        <position position="125"/>
    </location>
    <ligand>
        <name>S-adenosyl-L-methionine</name>
        <dbReference type="ChEBI" id="CHEBI:59789"/>
    </ligand>
</feature>
<feature type="binding site" evidence="1">
    <location>
        <begin position="145"/>
        <end position="150"/>
    </location>
    <ligand>
        <name>S-adenosyl-L-methionine</name>
        <dbReference type="ChEBI" id="CHEBI:59789"/>
    </ligand>
</feature>
<name>TRMD_BURCM</name>
<accession>Q0BH67</accession>
<dbReference type="EC" id="2.1.1.228" evidence="1"/>
<dbReference type="EMBL" id="CP000440">
    <property type="protein sequence ID" value="ABI86506.1"/>
    <property type="molecule type" value="Genomic_DNA"/>
</dbReference>
<dbReference type="RefSeq" id="WP_006761287.1">
    <property type="nucleotide sequence ID" value="NZ_CP009798.1"/>
</dbReference>
<dbReference type="SMR" id="Q0BH67"/>
<dbReference type="GeneID" id="93083644"/>
<dbReference type="KEGG" id="bam:Bamb_0947"/>
<dbReference type="eggNOG" id="COG0336">
    <property type="taxonomic scope" value="Bacteria"/>
</dbReference>
<dbReference type="Proteomes" id="UP000000662">
    <property type="component" value="Chromosome 1"/>
</dbReference>
<dbReference type="GO" id="GO:0005829">
    <property type="term" value="C:cytosol"/>
    <property type="evidence" value="ECO:0007669"/>
    <property type="project" value="TreeGrafter"/>
</dbReference>
<dbReference type="GO" id="GO:0052906">
    <property type="term" value="F:tRNA (guanine(37)-N1)-methyltransferase activity"/>
    <property type="evidence" value="ECO:0007669"/>
    <property type="project" value="UniProtKB-UniRule"/>
</dbReference>
<dbReference type="GO" id="GO:0002939">
    <property type="term" value="P:tRNA N1-guanine methylation"/>
    <property type="evidence" value="ECO:0007669"/>
    <property type="project" value="TreeGrafter"/>
</dbReference>
<dbReference type="CDD" id="cd18080">
    <property type="entry name" value="TrmD-like"/>
    <property type="match status" value="1"/>
</dbReference>
<dbReference type="FunFam" id="1.10.1270.20:FF:000001">
    <property type="entry name" value="tRNA (guanine-N(1)-)-methyltransferase"/>
    <property type="match status" value="1"/>
</dbReference>
<dbReference type="FunFam" id="3.40.1280.10:FF:000001">
    <property type="entry name" value="tRNA (guanine-N(1)-)-methyltransferase"/>
    <property type="match status" value="1"/>
</dbReference>
<dbReference type="Gene3D" id="3.40.1280.10">
    <property type="match status" value="1"/>
</dbReference>
<dbReference type="Gene3D" id="1.10.1270.20">
    <property type="entry name" value="tRNA(m1g37)methyltransferase, domain 2"/>
    <property type="match status" value="1"/>
</dbReference>
<dbReference type="HAMAP" id="MF_00605">
    <property type="entry name" value="TrmD"/>
    <property type="match status" value="1"/>
</dbReference>
<dbReference type="InterPro" id="IPR029028">
    <property type="entry name" value="Alpha/beta_knot_MTases"/>
</dbReference>
<dbReference type="InterPro" id="IPR023148">
    <property type="entry name" value="tRNA_m1G_MeTrfase_C_sf"/>
</dbReference>
<dbReference type="InterPro" id="IPR002649">
    <property type="entry name" value="tRNA_m1G_MeTrfase_TrmD"/>
</dbReference>
<dbReference type="InterPro" id="IPR029026">
    <property type="entry name" value="tRNA_m1G_MTases_N"/>
</dbReference>
<dbReference type="InterPro" id="IPR016009">
    <property type="entry name" value="tRNA_MeTrfase_TRMD/TRM10"/>
</dbReference>
<dbReference type="NCBIfam" id="NF000648">
    <property type="entry name" value="PRK00026.1"/>
    <property type="match status" value="1"/>
</dbReference>
<dbReference type="NCBIfam" id="TIGR00088">
    <property type="entry name" value="trmD"/>
    <property type="match status" value="1"/>
</dbReference>
<dbReference type="PANTHER" id="PTHR46417">
    <property type="entry name" value="TRNA (GUANINE-N(1)-)-METHYLTRANSFERASE"/>
    <property type="match status" value="1"/>
</dbReference>
<dbReference type="PANTHER" id="PTHR46417:SF1">
    <property type="entry name" value="TRNA (GUANINE-N(1)-)-METHYLTRANSFERASE"/>
    <property type="match status" value="1"/>
</dbReference>
<dbReference type="Pfam" id="PF01746">
    <property type="entry name" value="tRNA_m1G_MT"/>
    <property type="match status" value="1"/>
</dbReference>
<dbReference type="PIRSF" id="PIRSF000386">
    <property type="entry name" value="tRNA_mtase"/>
    <property type="match status" value="1"/>
</dbReference>
<dbReference type="SUPFAM" id="SSF75217">
    <property type="entry name" value="alpha/beta knot"/>
    <property type="match status" value="1"/>
</dbReference>
<sequence>MNQVTESAVQFDVVTLFPEMFRALTDWGITSRAVKQERFGLRTWNPRDFTTDNYRTVDDRPYGGGPGMVMLAKPLEAAIGAAKAAQAEQGVASTRVVMMSPQGAPFTHERAVRMAQEPGVIVLCGRYEAIDQRLLDRCVDEEISLGDFVLSGGELPAMAMMDAVVRLLPGVLNDAQSAVQDSFVDGLLDCPHYTRPEEYEGMRVPDVLLGGHHAEIERWRRQEALKNTLRKRPDLIVRARREKLLSRADEAWLANLAREAKNAS</sequence>
<evidence type="ECO:0000255" key="1">
    <source>
        <dbReference type="HAMAP-Rule" id="MF_00605"/>
    </source>
</evidence>
<organism>
    <name type="scientific">Burkholderia ambifaria (strain ATCC BAA-244 / DSM 16087 / CCUG 44356 / LMG 19182 / AMMD)</name>
    <name type="common">Burkholderia cepacia (strain AMMD)</name>
    <dbReference type="NCBI Taxonomy" id="339670"/>
    <lineage>
        <taxon>Bacteria</taxon>
        <taxon>Pseudomonadati</taxon>
        <taxon>Pseudomonadota</taxon>
        <taxon>Betaproteobacteria</taxon>
        <taxon>Burkholderiales</taxon>
        <taxon>Burkholderiaceae</taxon>
        <taxon>Burkholderia</taxon>
        <taxon>Burkholderia cepacia complex</taxon>
    </lineage>
</organism>
<gene>
    <name evidence="1" type="primary">trmD</name>
    <name type="ordered locus">Bamb_0947</name>
</gene>
<keyword id="KW-0963">Cytoplasm</keyword>
<keyword id="KW-0489">Methyltransferase</keyword>
<keyword id="KW-0949">S-adenosyl-L-methionine</keyword>
<keyword id="KW-0808">Transferase</keyword>
<keyword id="KW-0819">tRNA processing</keyword>
<proteinExistence type="inferred from homology"/>
<comment type="function">
    <text evidence="1">Specifically methylates guanosine-37 in various tRNAs.</text>
</comment>
<comment type="catalytic activity">
    <reaction evidence="1">
        <text>guanosine(37) in tRNA + S-adenosyl-L-methionine = N(1)-methylguanosine(37) in tRNA + S-adenosyl-L-homocysteine + H(+)</text>
        <dbReference type="Rhea" id="RHEA:36899"/>
        <dbReference type="Rhea" id="RHEA-COMP:10145"/>
        <dbReference type="Rhea" id="RHEA-COMP:10147"/>
        <dbReference type="ChEBI" id="CHEBI:15378"/>
        <dbReference type="ChEBI" id="CHEBI:57856"/>
        <dbReference type="ChEBI" id="CHEBI:59789"/>
        <dbReference type="ChEBI" id="CHEBI:73542"/>
        <dbReference type="ChEBI" id="CHEBI:74269"/>
        <dbReference type="EC" id="2.1.1.228"/>
    </reaction>
</comment>
<comment type="subunit">
    <text evidence="1">Homodimer.</text>
</comment>
<comment type="subcellular location">
    <subcellularLocation>
        <location evidence="1">Cytoplasm</location>
    </subcellularLocation>
</comment>
<comment type="similarity">
    <text evidence="1">Belongs to the RNA methyltransferase TrmD family.</text>
</comment>
<protein>
    <recommendedName>
        <fullName evidence="1">tRNA (guanine-N(1)-)-methyltransferase</fullName>
        <ecNumber evidence="1">2.1.1.228</ecNumber>
    </recommendedName>
    <alternativeName>
        <fullName evidence="1">M1G-methyltransferase</fullName>
    </alternativeName>
    <alternativeName>
        <fullName evidence="1">tRNA [GM37] methyltransferase</fullName>
    </alternativeName>
</protein>
<reference key="1">
    <citation type="submission" date="2006-08" db="EMBL/GenBank/DDBJ databases">
        <title>Complete sequence of chromosome 1 of Burkholderia cepacia AMMD.</title>
        <authorList>
            <person name="Copeland A."/>
            <person name="Lucas S."/>
            <person name="Lapidus A."/>
            <person name="Barry K."/>
            <person name="Detter J.C."/>
            <person name="Glavina del Rio T."/>
            <person name="Hammon N."/>
            <person name="Israni S."/>
            <person name="Pitluck S."/>
            <person name="Bruce D."/>
            <person name="Chain P."/>
            <person name="Malfatti S."/>
            <person name="Shin M."/>
            <person name="Vergez L."/>
            <person name="Schmutz J."/>
            <person name="Larimer F."/>
            <person name="Land M."/>
            <person name="Hauser L."/>
            <person name="Kyrpides N."/>
            <person name="Kim E."/>
            <person name="Parke J."/>
            <person name="Coenye T."/>
            <person name="Konstantinidis K."/>
            <person name="Ramette A."/>
            <person name="Tiedje J."/>
            <person name="Richardson P."/>
        </authorList>
    </citation>
    <scope>NUCLEOTIDE SEQUENCE [LARGE SCALE GENOMIC DNA]</scope>
    <source>
        <strain>ATCC BAA-244 / DSM 16087 / CCUG 44356 / LMG 19182 / AMMD</strain>
    </source>
</reference>